<dbReference type="EC" id="2.7.7.6" evidence="1"/>
<dbReference type="EMBL" id="CP001399">
    <property type="protein sequence ID" value="ACP35944.1"/>
    <property type="molecule type" value="Genomic_DNA"/>
</dbReference>
<dbReference type="RefSeq" id="WP_012711784.1">
    <property type="nucleotide sequence ID" value="NC_012589.1"/>
</dbReference>
<dbReference type="SMR" id="C3MRD1"/>
<dbReference type="KEGG" id="sis:LS215_1949"/>
<dbReference type="HOGENOM" id="CLU_090381_5_1_2"/>
<dbReference type="OrthoDB" id="24205at2157"/>
<dbReference type="Proteomes" id="UP000001747">
    <property type="component" value="Chromosome"/>
</dbReference>
<dbReference type="GO" id="GO:0005737">
    <property type="term" value="C:cytoplasm"/>
    <property type="evidence" value="ECO:0007669"/>
    <property type="project" value="UniProtKB-SubCell"/>
</dbReference>
<dbReference type="GO" id="GO:0000428">
    <property type="term" value="C:DNA-directed RNA polymerase complex"/>
    <property type="evidence" value="ECO:0007669"/>
    <property type="project" value="UniProtKB-KW"/>
</dbReference>
<dbReference type="GO" id="GO:0003677">
    <property type="term" value="F:DNA binding"/>
    <property type="evidence" value="ECO:0007669"/>
    <property type="project" value="InterPro"/>
</dbReference>
<dbReference type="GO" id="GO:0003899">
    <property type="term" value="F:DNA-directed RNA polymerase activity"/>
    <property type="evidence" value="ECO:0007669"/>
    <property type="project" value="UniProtKB-UniRule"/>
</dbReference>
<dbReference type="GO" id="GO:0046983">
    <property type="term" value="F:protein dimerization activity"/>
    <property type="evidence" value="ECO:0007669"/>
    <property type="project" value="InterPro"/>
</dbReference>
<dbReference type="GO" id="GO:0006351">
    <property type="term" value="P:DNA-templated transcription"/>
    <property type="evidence" value="ECO:0007669"/>
    <property type="project" value="UniProtKB-UniRule"/>
</dbReference>
<dbReference type="Gene3D" id="3.30.1360.10">
    <property type="entry name" value="RNA polymerase, RBP11-like subunit"/>
    <property type="match status" value="1"/>
</dbReference>
<dbReference type="HAMAP" id="MF_00261">
    <property type="entry name" value="RNApol_arch_Rpo11"/>
    <property type="match status" value="1"/>
</dbReference>
<dbReference type="InterPro" id="IPR036603">
    <property type="entry name" value="RBP11-like"/>
</dbReference>
<dbReference type="InterPro" id="IPR009025">
    <property type="entry name" value="RBP11-like_dimer"/>
</dbReference>
<dbReference type="InterPro" id="IPR008193">
    <property type="entry name" value="RNA_pol_Rpb11_13-16kDa_CS"/>
</dbReference>
<dbReference type="InterPro" id="IPR022905">
    <property type="entry name" value="Rpo11-like"/>
</dbReference>
<dbReference type="NCBIfam" id="NF002233">
    <property type="entry name" value="PRK01146.1-1"/>
    <property type="match status" value="1"/>
</dbReference>
<dbReference type="PANTHER" id="PTHR13946">
    <property type="entry name" value="DNA-DIRECTED RNA POLYMERASE I,II,III"/>
    <property type="match status" value="1"/>
</dbReference>
<dbReference type="PANTHER" id="PTHR13946:SF28">
    <property type="entry name" value="DNA-DIRECTED RNA POLYMERASES I AND III SUBUNIT RPAC2"/>
    <property type="match status" value="1"/>
</dbReference>
<dbReference type="Pfam" id="PF13656">
    <property type="entry name" value="RNA_pol_L_2"/>
    <property type="match status" value="1"/>
</dbReference>
<dbReference type="SUPFAM" id="SSF55257">
    <property type="entry name" value="RBP11-like subunits of RNA polymerase"/>
    <property type="match status" value="1"/>
</dbReference>
<dbReference type="PROSITE" id="PS01154">
    <property type="entry name" value="RNA_POL_L_13KD"/>
    <property type="match status" value="1"/>
</dbReference>
<proteinExistence type="inferred from homology"/>
<name>RPO11_SACI2</name>
<organism>
    <name type="scientific">Saccharolobus islandicus (strain L.S.2.15 / Lassen #1)</name>
    <name type="common">Sulfolobus islandicus</name>
    <dbReference type="NCBI Taxonomy" id="429572"/>
    <lineage>
        <taxon>Archaea</taxon>
        <taxon>Thermoproteota</taxon>
        <taxon>Thermoprotei</taxon>
        <taxon>Sulfolobales</taxon>
        <taxon>Sulfolobaceae</taxon>
        <taxon>Saccharolobus</taxon>
    </lineage>
</organism>
<protein>
    <recommendedName>
        <fullName evidence="1">DNA-directed RNA polymerase subunit Rpo11</fullName>
        <ecNumber evidence="1">2.7.7.6</ecNumber>
    </recommendedName>
    <alternativeName>
        <fullName evidence="1">DNA-directed RNA polymerase subunit L</fullName>
    </alternativeName>
</protein>
<accession>C3MRD1</accession>
<evidence type="ECO:0000255" key="1">
    <source>
        <dbReference type="HAMAP-Rule" id="MF_00261"/>
    </source>
</evidence>
<comment type="function">
    <text evidence="1">DNA-dependent RNA polymerase (RNAP) catalyzes the transcription of DNA into RNA using the four ribonucleoside triphosphates as substrates.</text>
</comment>
<comment type="catalytic activity">
    <reaction evidence="1">
        <text>RNA(n) + a ribonucleoside 5'-triphosphate = RNA(n+1) + diphosphate</text>
        <dbReference type="Rhea" id="RHEA:21248"/>
        <dbReference type="Rhea" id="RHEA-COMP:14527"/>
        <dbReference type="Rhea" id="RHEA-COMP:17342"/>
        <dbReference type="ChEBI" id="CHEBI:33019"/>
        <dbReference type="ChEBI" id="CHEBI:61557"/>
        <dbReference type="ChEBI" id="CHEBI:140395"/>
        <dbReference type="EC" id="2.7.7.6"/>
    </reaction>
</comment>
<comment type="subunit">
    <text evidence="1">Part of the RNA polymerase complex.</text>
</comment>
<comment type="subcellular location">
    <subcellularLocation>
        <location evidence="1">Cytoplasm</location>
    </subcellularLocation>
</comment>
<comment type="similarity">
    <text evidence="1">Belongs to the archaeal Rpo11/eukaryotic RPB11/RPC19 RNA polymerase subunit family.</text>
</comment>
<sequence length="92" mass="10253">MEIKILKSERNYLELEIEGEDHTLGNLIAGTLRKISGVSFASYYQPHPLTDKIIVKILTDGSIAPKDALLKAIETVRVMASHYIDEIKGLSK</sequence>
<feature type="chain" id="PRO_1000204670" description="DNA-directed RNA polymerase subunit Rpo11">
    <location>
        <begin position="1"/>
        <end position="92"/>
    </location>
</feature>
<gene>
    <name evidence="1" type="primary">rpo11</name>
    <name evidence="1" type="synonym">rpoL</name>
    <name type="ordered locus">LS215_1949</name>
</gene>
<keyword id="KW-0963">Cytoplasm</keyword>
<keyword id="KW-0240">DNA-directed RNA polymerase</keyword>
<keyword id="KW-0548">Nucleotidyltransferase</keyword>
<keyword id="KW-0804">Transcription</keyword>
<keyword id="KW-0808">Transferase</keyword>
<reference key="1">
    <citation type="journal article" date="2009" name="Proc. Natl. Acad. Sci. U.S.A.">
        <title>Biogeography of the Sulfolobus islandicus pan-genome.</title>
        <authorList>
            <person name="Reno M.L."/>
            <person name="Held N.L."/>
            <person name="Fields C.J."/>
            <person name="Burke P.V."/>
            <person name="Whitaker R.J."/>
        </authorList>
    </citation>
    <scope>NUCLEOTIDE SEQUENCE [LARGE SCALE GENOMIC DNA]</scope>
    <source>
        <strain>L.S.2.15 / Lassen #1</strain>
    </source>
</reference>